<feature type="chain" id="PRO_0000298046" description="S-ribosylhomocysteine lyase">
    <location>
        <begin position="1"/>
        <end position="160"/>
    </location>
</feature>
<feature type="binding site" evidence="1">
    <location>
        <position position="57"/>
    </location>
    <ligand>
        <name>Fe cation</name>
        <dbReference type="ChEBI" id="CHEBI:24875"/>
    </ligand>
</feature>
<feature type="binding site" evidence="1">
    <location>
        <position position="61"/>
    </location>
    <ligand>
        <name>Fe cation</name>
        <dbReference type="ChEBI" id="CHEBI:24875"/>
    </ligand>
</feature>
<feature type="binding site" evidence="1">
    <location>
        <position position="127"/>
    </location>
    <ligand>
        <name>Fe cation</name>
        <dbReference type="ChEBI" id="CHEBI:24875"/>
    </ligand>
</feature>
<protein>
    <recommendedName>
        <fullName evidence="1">S-ribosylhomocysteine lyase</fullName>
        <ecNumber evidence="1">4.4.1.21</ecNumber>
    </recommendedName>
    <alternativeName>
        <fullName evidence="1">AI-2 synthesis protein</fullName>
    </alternativeName>
    <alternativeName>
        <fullName evidence="1">Autoinducer-2 production protein LuxS</fullName>
    </alternativeName>
</protein>
<comment type="function">
    <text evidence="1">Involved in the synthesis of autoinducer 2 (AI-2) which is secreted by bacteria and is used to communicate both the cell density and the metabolic potential of the environment. The regulation of gene expression in response to changes in cell density is called quorum sensing. Catalyzes the transformation of S-ribosylhomocysteine (RHC) to homocysteine (HC) and 4,5-dihydroxy-2,3-pentadione (DPD).</text>
</comment>
<comment type="catalytic activity">
    <reaction evidence="1">
        <text>S-(5-deoxy-D-ribos-5-yl)-L-homocysteine = (S)-4,5-dihydroxypentane-2,3-dione + L-homocysteine</text>
        <dbReference type="Rhea" id="RHEA:17753"/>
        <dbReference type="ChEBI" id="CHEBI:29484"/>
        <dbReference type="ChEBI" id="CHEBI:58195"/>
        <dbReference type="ChEBI" id="CHEBI:58199"/>
        <dbReference type="EC" id="4.4.1.21"/>
    </reaction>
</comment>
<comment type="cofactor">
    <cofactor evidence="1">
        <name>Fe cation</name>
        <dbReference type="ChEBI" id="CHEBI:24875"/>
    </cofactor>
    <text evidence="1">Binds 1 Fe cation per subunit.</text>
</comment>
<comment type="subunit">
    <text evidence="1">Homodimer.</text>
</comment>
<comment type="similarity">
    <text evidence="1">Belongs to the LuxS family.</text>
</comment>
<comment type="sequence caution" evidence="2">
    <conflict type="erroneous initiation">
        <sequence resource="EMBL-CDS" id="ABF38408"/>
    </conflict>
</comment>
<accession>Q1J5H8</accession>
<gene>
    <name evidence="1" type="primary">luxS</name>
    <name type="ordered locus">MGAS10750_Spy1458</name>
</gene>
<dbReference type="EC" id="4.4.1.21" evidence="1"/>
<dbReference type="EMBL" id="CP000262">
    <property type="protein sequence ID" value="ABF38408.1"/>
    <property type="status" value="ALT_INIT"/>
    <property type="molecule type" value="Genomic_DNA"/>
</dbReference>
<dbReference type="SMR" id="Q1J5H8"/>
<dbReference type="KEGG" id="spi:MGAS10750_Spy1458"/>
<dbReference type="HOGENOM" id="CLU_107531_2_1_9"/>
<dbReference type="Proteomes" id="UP000002434">
    <property type="component" value="Chromosome"/>
</dbReference>
<dbReference type="GO" id="GO:0005506">
    <property type="term" value="F:iron ion binding"/>
    <property type="evidence" value="ECO:0007669"/>
    <property type="project" value="InterPro"/>
</dbReference>
<dbReference type="GO" id="GO:0043768">
    <property type="term" value="F:S-ribosylhomocysteine lyase activity"/>
    <property type="evidence" value="ECO:0007669"/>
    <property type="project" value="UniProtKB-UniRule"/>
</dbReference>
<dbReference type="GO" id="GO:0009372">
    <property type="term" value="P:quorum sensing"/>
    <property type="evidence" value="ECO:0007669"/>
    <property type="project" value="UniProtKB-UniRule"/>
</dbReference>
<dbReference type="Gene3D" id="3.30.1360.80">
    <property type="entry name" value="S-ribosylhomocysteinase (LuxS)"/>
    <property type="match status" value="1"/>
</dbReference>
<dbReference type="HAMAP" id="MF_00091">
    <property type="entry name" value="LuxS"/>
    <property type="match status" value="1"/>
</dbReference>
<dbReference type="InterPro" id="IPR037005">
    <property type="entry name" value="LuxS_sf"/>
</dbReference>
<dbReference type="InterPro" id="IPR011249">
    <property type="entry name" value="Metalloenz_LuxS/M16"/>
</dbReference>
<dbReference type="InterPro" id="IPR003815">
    <property type="entry name" value="S-ribosylhomocysteinase"/>
</dbReference>
<dbReference type="NCBIfam" id="NF002607">
    <property type="entry name" value="PRK02260.2-5"/>
    <property type="match status" value="1"/>
</dbReference>
<dbReference type="NCBIfam" id="NF002608">
    <property type="entry name" value="PRK02260.3-1"/>
    <property type="match status" value="1"/>
</dbReference>
<dbReference type="PANTHER" id="PTHR35799">
    <property type="entry name" value="S-RIBOSYLHOMOCYSTEINE LYASE"/>
    <property type="match status" value="1"/>
</dbReference>
<dbReference type="PANTHER" id="PTHR35799:SF1">
    <property type="entry name" value="S-RIBOSYLHOMOCYSTEINE LYASE"/>
    <property type="match status" value="1"/>
</dbReference>
<dbReference type="Pfam" id="PF02664">
    <property type="entry name" value="LuxS"/>
    <property type="match status" value="1"/>
</dbReference>
<dbReference type="PIRSF" id="PIRSF006160">
    <property type="entry name" value="AI2"/>
    <property type="match status" value="1"/>
</dbReference>
<dbReference type="PRINTS" id="PR01487">
    <property type="entry name" value="LUXSPROTEIN"/>
</dbReference>
<dbReference type="SUPFAM" id="SSF63411">
    <property type="entry name" value="LuxS/MPP-like metallohydrolase"/>
    <property type="match status" value="1"/>
</dbReference>
<keyword id="KW-0071">Autoinducer synthesis</keyword>
<keyword id="KW-0408">Iron</keyword>
<keyword id="KW-0456">Lyase</keyword>
<keyword id="KW-0479">Metal-binding</keyword>
<keyword id="KW-0673">Quorum sensing</keyword>
<proteinExistence type="inferred from homology"/>
<reference key="1">
    <citation type="journal article" date="2006" name="Proc. Natl. Acad. Sci. U.S.A.">
        <title>Molecular genetic anatomy of inter- and intraserotype variation in the human bacterial pathogen group A Streptococcus.</title>
        <authorList>
            <person name="Beres S.B."/>
            <person name="Richter E.W."/>
            <person name="Nagiec M.J."/>
            <person name="Sumby P."/>
            <person name="Porcella S.F."/>
            <person name="DeLeo F.R."/>
            <person name="Musser J.M."/>
        </authorList>
    </citation>
    <scope>NUCLEOTIDE SEQUENCE [LARGE SCALE GENOMIC DNA]</scope>
    <source>
        <strain>MGAS10750</strain>
    </source>
</reference>
<sequence length="160" mass="18006">MTKEVIVESFELDHTIVKAPYVRLISEEFGPKGDRITNFDVRLVQPNQNSIETAGLHTIEHLLAKLIRQRIDGMIDCSPFGCRTGFHLIMWGKHSSTDIAKVIKSSLEEIATGITWEDVPGTTLESCGNYKDHNLFAAKEWAQLIIDQGISDDPFSRHVI</sequence>
<evidence type="ECO:0000255" key="1">
    <source>
        <dbReference type="HAMAP-Rule" id="MF_00091"/>
    </source>
</evidence>
<evidence type="ECO:0000305" key="2"/>
<name>LUXS_STRPF</name>
<organism>
    <name type="scientific">Streptococcus pyogenes serotype M4 (strain MGAS10750)</name>
    <dbReference type="NCBI Taxonomy" id="370554"/>
    <lineage>
        <taxon>Bacteria</taxon>
        <taxon>Bacillati</taxon>
        <taxon>Bacillota</taxon>
        <taxon>Bacilli</taxon>
        <taxon>Lactobacillales</taxon>
        <taxon>Streptococcaceae</taxon>
        <taxon>Streptococcus</taxon>
    </lineage>
</organism>